<comment type="similarity">
    <text evidence="1">Belongs to the UPF0235 family.</text>
</comment>
<sequence length="99" mass="10966">MPAVEKIGDNLRLRIFLQPKASKDHLIGLYDNALKISITAPPIDGQANAHLLKFLSKTFKVAKSQIILEKGELSRHKQILIPHPKSIPPVVANLLIETT</sequence>
<feature type="chain" id="PRO_1000130689" description="UPF0235 protein HSM_1819">
    <location>
        <begin position="1"/>
        <end position="99"/>
    </location>
</feature>
<accession>B0UWD6</accession>
<dbReference type="EMBL" id="CP000947">
    <property type="protein sequence ID" value="ACA31606.1"/>
    <property type="molecule type" value="Genomic_DNA"/>
</dbReference>
<dbReference type="RefSeq" id="WP_011609802.1">
    <property type="nucleotide sequence ID" value="NC_010519.1"/>
</dbReference>
<dbReference type="SMR" id="B0UWD6"/>
<dbReference type="STRING" id="228400.HSM_1819"/>
<dbReference type="GeneID" id="31488127"/>
<dbReference type="KEGG" id="hsm:HSM_1819"/>
<dbReference type="HOGENOM" id="CLU_130694_5_0_6"/>
<dbReference type="GO" id="GO:0005737">
    <property type="term" value="C:cytoplasm"/>
    <property type="evidence" value="ECO:0007669"/>
    <property type="project" value="TreeGrafter"/>
</dbReference>
<dbReference type="Gene3D" id="3.30.1200.10">
    <property type="entry name" value="YggU-like"/>
    <property type="match status" value="1"/>
</dbReference>
<dbReference type="HAMAP" id="MF_00634">
    <property type="entry name" value="UPF0235"/>
    <property type="match status" value="1"/>
</dbReference>
<dbReference type="InterPro" id="IPR003746">
    <property type="entry name" value="DUF167"/>
</dbReference>
<dbReference type="InterPro" id="IPR036591">
    <property type="entry name" value="YggU-like_sf"/>
</dbReference>
<dbReference type="NCBIfam" id="TIGR00251">
    <property type="entry name" value="DUF167 family protein"/>
    <property type="match status" value="1"/>
</dbReference>
<dbReference type="NCBIfam" id="NF003466">
    <property type="entry name" value="PRK05090.1"/>
    <property type="match status" value="1"/>
</dbReference>
<dbReference type="PANTHER" id="PTHR13420">
    <property type="entry name" value="UPF0235 PROTEIN C15ORF40"/>
    <property type="match status" value="1"/>
</dbReference>
<dbReference type="PANTHER" id="PTHR13420:SF7">
    <property type="entry name" value="UPF0235 PROTEIN C15ORF40"/>
    <property type="match status" value="1"/>
</dbReference>
<dbReference type="Pfam" id="PF02594">
    <property type="entry name" value="DUF167"/>
    <property type="match status" value="1"/>
</dbReference>
<dbReference type="SMART" id="SM01152">
    <property type="entry name" value="DUF167"/>
    <property type="match status" value="1"/>
</dbReference>
<dbReference type="SUPFAM" id="SSF69786">
    <property type="entry name" value="YggU-like"/>
    <property type="match status" value="1"/>
</dbReference>
<proteinExistence type="inferred from homology"/>
<evidence type="ECO:0000255" key="1">
    <source>
        <dbReference type="HAMAP-Rule" id="MF_00634"/>
    </source>
</evidence>
<reference key="1">
    <citation type="submission" date="2008-02" db="EMBL/GenBank/DDBJ databases">
        <title>Complete sequence of Haemophilus somnus 2336.</title>
        <authorList>
            <consortium name="US DOE Joint Genome Institute"/>
            <person name="Siddaramappa S."/>
            <person name="Duncan A.J."/>
            <person name="Challacombe J.F."/>
            <person name="Rainey D."/>
            <person name="Gillaspy A.F."/>
            <person name="Carson M."/>
            <person name="Gipson J."/>
            <person name="Gipson M."/>
            <person name="Bruce D."/>
            <person name="Detter J.C."/>
            <person name="Han C.S."/>
            <person name="Land M."/>
            <person name="Tapia R."/>
            <person name="Thompson L.S."/>
            <person name="Orvis J."/>
            <person name="Zaitshik J."/>
            <person name="Barnes G."/>
            <person name="Brettin T.S."/>
            <person name="Dyer D.W."/>
            <person name="Inzana T.J."/>
        </authorList>
    </citation>
    <scope>NUCLEOTIDE SEQUENCE [LARGE SCALE GENOMIC DNA]</scope>
    <source>
        <strain>2336</strain>
    </source>
</reference>
<protein>
    <recommendedName>
        <fullName evidence="1">UPF0235 protein HSM_1819</fullName>
    </recommendedName>
</protein>
<organism>
    <name type="scientific">Histophilus somni (strain 2336)</name>
    <name type="common">Haemophilus somnus</name>
    <dbReference type="NCBI Taxonomy" id="228400"/>
    <lineage>
        <taxon>Bacteria</taxon>
        <taxon>Pseudomonadati</taxon>
        <taxon>Pseudomonadota</taxon>
        <taxon>Gammaproteobacteria</taxon>
        <taxon>Pasteurellales</taxon>
        <taxon>Pasteurellaceae</taxon>
        <taxon>Histophilus</taxon>
    </lineage>
</organism>
<name>Y1819_HISS2</name>
<gene>
    <name type="ordered locus">HSM_1819</name>
</gene>